<name>KTHY_PARUW</name>
<accession>Q6MCA2</accession>
<keyword id="KW-0067">ATP-binding</keyword>
<keyword id="KW-0418">Kinase</keyword>
<keyword id="KW-0545">Nucleotide biosynthesis</keyword>
<keyword id="KW-0547">Nucleotide-binding</keyword>
<keyword id="KW-1185">Reference proteome</keyword>
<keyword id="KW-0808">Transferase</keyword>
<feature type="chain" id="PRO_0000155316" description="Thymidylate kinase">
    <location>
        <begin position="1"/>
        <end position="225"/>
    </location>
</feature>
<feature type="binding site" evidence="1">
    <location>
        <begin position="15"/>
        <end position="22"/>
    </location>
    <ligand>
        <name>ATP</name>
        <dbReference type="ChEBI" id="CHEBI:30616"/>
    </ligand>
</feature>
<proteinExistence type="inferred from homology"/>
<reference key="1">
    <citation type="journal article" date="2004" name="Science">
        <title>Illuminating the evolutionary history of chlamydiae.</title>
        <authorList>
            <person name="Horn M."/>
            <person name="Collingro A."/>
            <person name="Schmitz-Esser S."/>
            <person name="Beier C.L."/>
            <person name="Purkhold U."/>
            <person name="Fartmann B."/>
            <person name="Brandt P."/>
            <person name="Nyakatura G.J."/>
            <person name="Droege M."/>
            <person name="Frishman D."/>
            <person name="Rattei T."/>
            <person name="Mewes H.-W."/>
            <person name="Wagner M."/>
        </authorList>
    </citation>
    <scope>NUCLEOTIDE SEQUENCE [LARGE SCALE GENOMIC DNA]</scope>
    <source>
        <strain>UWE25</strain>
    </source>
</reference>
<gene>
    <name evidence="1" type="primary">tmk</name>
    <name type="ordered locus">pc1073</name>
</gene>
<dbReference type="EC" id="2.7.4.9" evidence="1"/>
<dbReference type="EMBL" id="BX908798">
    <property type="protein sequence ID" value="CAF23797.1"/>
    <property type="molecule type" value="Genomic_DNA"/>
</dbReference>
<dbReference type="RefSeq" id="WP_011175623.1">
    <property type="nucleotide sequence ID" value="NC_005861.2"/>
</dbReference>
<dbReference type="SMR" id="Q6MCA2"/>
<dbReference type="STRING" id="264201.pc1073"/>
<dbReference type="KEGG" id="pcu:PC_RS05170"/>
<dbReference type="eggNOG" id="COG0125">
    <property type="taxonomic scope" value="Bacteria"/>
</dbReference>
<dbReference type="HOGENOM" id="CLU_049131_0_2_0"/>
<dbReference type="OrthoDB" id="9774907at2"/>
<dbReference type="Proteomes" id="UP000000529">
    <property type="component" value="Chromosome"/>
</dbReference>
<dbReference type="GO" id="GO:0005829">
    <property type="term" value="C:cytosol"/>
    <property type="evidence" value="ECO:0007669"/>
    <property type="project" value="TreeGrafter"/>
</dbReference>
<dbReference type="GO" id="GO:0005524">
    <property type="term" value="F:ATP binding"/>
    <property type="evidence" value="ECO:0007669"/>
    <property type="project" value="UniProtKB-UniRule"/>
</dbReference>
<dbReference type="GO" id="GO:0004798">
    <property type="term" value="F:dTMP kinase activity"/>
    <property type="evidence" value="ECO:0007669"/>
    <property type="project" value="UniProtKB-UniRule"/>
</dbReference>
<dbReference type="GO" id="GO:0006233">
    <property type="term" value="P:dTDP biosynthetic process"/>
    <property type="evidence" value="ECO:0007669"/>
    <property type="project" value="InterPro"/>
</dbReference>
<dbReference type="GO" id="GO:0006235">
    <property type="term" value="P:dTTP biosynthetic process"/>
    <property type="evidence" value="ECO:0007669"/>
    <property type="project" value="UniProtKB-UniRule"/>
</dbReference>
<dbReference type="GO" id="GO:0006227">
    <property type="term" value="P:dUDP biosynthetic process"/>
    <property type="evidence" value="ECO:0007669"/>
    <property type="project" value="TreeGrafter"/>
</dbReference>
<dbReference type="CDD" id="cd01672">
    <property type="entry name" value="TMPK"/>
    <property type="match status" value="1"/>
</dbReference>
<dbReference type="FunFam" id="3.40.50.300:FF:000225">
    <property type="entry name" value="Thymidylate kinase"/>
    <property type="match status" value="1"/>
</dbReference>
<dbReference type="Gene3D" id="3.40.50.300">
    <property type="entry name" value="P-loop containing nucleotide triphosphate hydrolases"/>
    <property type="match status" value="1"/>
</dbReference>
<dbReference type="HAMAP" id="MF_00165">
    <property type="entry name" value="Thymidylate_kinase"/>
    <property type="match status" value="1"/>
</dbReference>
<dbReference type="InterPro" id="IPR027417">
    <property type="entry name" value="P-loop_NTPase"/>
</dbReference>
<dbReference type="InterPro" id="IPR039430">
    <property type="entry name" value="Thymidylate_kin-like_dom"/>
</dbReference>
<dbReference type="InterPro" id="IPR018095">
    <property type="entry name" value="Thymidylate_kin_CS"/>
</dbReference>
<dbReference type="InterPro" id="IPR018094">
    <property type="entry name" value="Thymidylate_kinase"/>
</dbReference>
<dbReference type="NCBIfam" id="TIGR00041">
    <property type="entry name" value="DTMP_kinase"/>
    <property type="match status" value="1"/>
</dbReference>
<dbReference type="PANTHER" id="PTHR10344">
    <property type="entry name" value="THYMIDYLATE KINASE"/>
    <property type="match status" value="1"/>
</dbReference>
<dbReference type="PANTHER" id="PTHR10344:SF4">
    <property type="entry name" value="UMP-CMP KINASE 2, MITOCHONDRIAL"/>
    <property type="match status" value="1"/>
</dbReference>
<dbReference type="Pfam" id="PF02223">
    <property type="entry name" value="Thymidylate_kin"/>
    <property type="match status" value="1"/>
</dbReference>
<dbReference type="SUPFAM" id="SSF52540">
    <property type="entry name" value="P-loop containing nucleoside triphosphate hydrolases"/>
    <property type="match status" value="1"/>
</dbReference>
<dbReference type="PROSITE" id="PS01331">
    <property type="entry name" value="THYMIDYLATE_KINASE"/>
    <property type="match status" value="1"/>
</dbReference>
<evidence type="ECO:0000255" key="1">
    <source>
        <dbReference type="HAMAP-Rule" id="MF_00165"/>
    </source>
</evidence>
<protein>
    <recommendedName>
        <fullName evidence="1">Thymidylate kinase</fullName>
        <ecNumber evidence="1">2.7.4.9</ecNumber>
    </recommendedName>
    <alternativeName>
        <fullName evidence="1">dTMP kinase</fullName>
    </alternativeName>
</protein>
<organism>
    <name type="scientific">Protochlamydia amoebophila (strain UWE25)</name>
    <dbReference type="NCBI Taxonomy" id="264201"/>
    <lineage>
        <taxon>Bacteria</taxon>
        <taxon>Pseudomonadati</taxon>
        <taxon>Chlamydiota</taxon>
        <taxon>Chlamydiia</taxon>
        <taxon>Parachlamydiales</taxon>
        <taxon>Parachlamydiaceae</taxon>
        <taxon>Candidatus Protochlamydia</taxon>
    </lineage>
</organism>
<comment type="function">
    <text evidence="1">Phosphorylation of dTMP to form dTDP in both de novo and salvage pathways of dTTP synthesis.</text>
</comment>
<comment type="catalytic activity">
    <reaction evidence="1">
        <text>dTMP + ATP = dTDP + ADP</text>
        <dbReference type="Rhea" id="RHEA:13517"/>
        <dbReference type="ChEBI" id="CHEBI:30616"/>
        <dbReference type="ChEBI" id="CHEBI:58369"/>
        <dbReference type="ChEBI" id="CHEBI:63528"/>
        <dbReference type="ChEBI" id="CHEBI:456216"/>
        <dbReference type="EC" id="2.7.4.9"/>
    </reaction>
</comment>
<comment type="similarity">
    <text evidence="1">Belongs to the thymidylate kinase family.</text>
</comment>
<sequence length="225" mass="25495">MPSTKFKGYFITIEGGEGSGKSTLLNQLGDYFRNKGFEVIQTREPGGTKLGESIRHLLLNHEDSISIGHQAELLLFLAARAQHIEELIQPALKAGKIVLCDRFNDSTIAYQGAARGLNAKKIQEFCQLVCAEILPNWTLFLDVSPEIGLARTQKIQKVHAQMGQLDRIESEKIEFHERVRQAFLSLVQQEPQRIYRIDANESQSKVLQKALEFLEEQWSDSELKT</sequence>